<protein>
    <recommendedName>
        <fullName>G protein-activated inward rectifier potassium channel 3</fullName>
        <shortName>GIRK-3</shortName>
    </recommendedName>
    <alternativeName>
        <fullName>Inward rectifier K(+) channel Kir3.3</fullName>
    </alternativeName>
    <alternativeName>
        <fullName>Potassium channel, inwardly rectifying subfamily J member 9</fullName>
    </alternativeName>
</protein>
<evidence type="ECO:0000250" key="1"/>
<evidence type="ECO:0000250" key="2">
    <source>
        <dbReference type="UniProtKB" id="P63250"/>
    </source>
</evidence>
<evidence type="ECO:0000250" key="3">
    <source>
        <dbReference type="UniProtKB" id="Q63511"/>
    </source>
</evidence>
<evidence type="ECO:0000255" key="4"/>
<evidence type="ECO:0000256" key="5">
    <source>
        <dbReference type="SAM" id="MobiDB-lite"/>
    </source>
</evidence>
<evidence type="ECO:0000269" key="6">
    <source>
    </source>
</evidence>
<evidence type="ECO:0000269" key="7">
    <source>
    </source>
</evidence>
<evidence type="ECO:0000305" key="8"/>
<sequence>MAQENAAFSPGSEEPPRRRGRQRYVEKDGRCNVQQGNVRETYRYLTDLFTTLVDLQWRLSLLFFVLAYALTWLFFGAIWWLIAYGRGDLEHLEDTAWTPCVNNLNGFVAAFLFSIETETTIGYGHRVITDQCPEGIVLLLLQAILGSMVNAFMVGCMFVKISQPNKRAATLVFSSHAVVSLRDGRLCLMFRVGDLRSSHIVEASIRAKLIRSRQTLEGEFIPLHQTDLSVGFDTGDDRLFLVSPLVISHEIDAASPFWEASRRALERDDFEIVVILEGMVEATGMTCQARSSYLVDEVLWGHRFTSVLTLEDGFYEVDYASFHETFEVPTPSCSARELAEAAARLDAHLYWSIPSRLDEKVEEEGAGEGAGAGDGADKEHNGCLPPPESESKV</sequence>
<reference key="1">
    <citation type="journal article" date="1994" name="FEBS Lett.">
        <title>Cloning provides evidence for a family of inward rectifier and G-protein coupled K+ channels in the brain.</title>
        <authorList>
            <person name="Lesage F."/>
            <person name="Duprat F."/>
            <person name="Fink M."/>
            <person name="Guillemare E."/>
            <person name="Coppola T."/>
            <person name="Lazdunski M."/>
            <person name="Hugnot J.-P."/>
        </authorList>
    </citation>
    <scope>NUCLEOTIDE SEQUENCE [MRNA]</scope>
    <scope>FUNCTION</scope>
    <scope>TISSUE SPECIFICITY</scope>
    <source>
        <tissue>Brain</tissue>
    </source>
</reference>
<reference key="2">
    <citation type="journal article" date="1999" name="J. Membr. Biol.">
        <title>Functional expression and characterization of G-protein-gated inwardly rectifying K+ channels containing GIRK3.</title>
        <authorList>
            <person name="Jelacic T.M."/>
            <person name="Sims S.M."/>
            <person name="Clapham D.E."/>
        </authorList>
    </citation>
    <scope>NUCLEOTIDE SEQUENCE [MRNA]</scope>
    <scope>FUNCTION</scope>
    <scope>SUBUNIT</scope>
    <source>
        <tissue>Brain</tissue>
    </source>
</reference>
<reference key="3">
    <citation type="journal article" date="2004" name="Genome Res.">
        <title>The status, quality, and expansion of the NIH full-length cDNA project: the Mammalian Gene Collection (MGC).</title>
        <authorList>
            <consortium name="The MGC Project Team"/>
        </authorList>
    </citation>
    <scope>NUCLEOTIDE SEQUENCE [LARGE SCALE MRNA]</scope>
    <source>
        <strain>C57BL/6J</strain>
        <tissue>Brain</tissue>
    </source>
</reference>
<reference key="4">
    <citation type="journal article" date="2010" name="Cell">
        <title>A tissue-specific atlas of mouse protein phosphorylation and expression.</title>
        <authorList>
            <person name="Huttlin E.L."/>
            <person name="Jedrychowski M.P."/>
            <person name="Elias J.E."/>
            <person name="Goswami T."/>
            <person name="Rad R."/>
            <person name="Beausoleil S.A."/>
            <person name="Villen J."/>
            <person name="Haas W."/>
            <person name="Sowa M.E."/>
            <person name="Gygi S.P."/>
        </authorList>
    </citation>
    <scope>IDENTIFICATION BY MASS SPECTROMETRY [LARGE SCALE ANALYSIS]</scope>
    <source>
        <tissue>Brain</tissue>
    </source>
</reference>
<organism>
    <name type="scientific">Mus musculus</name>
    <name type="common">Mouse</name>
    <dbReference type="NCBI Taxonomy" id="10090"/>
    <lineage>
        <taxon>Eukaryota</taxon>
        <taxon>Metazoa</taxon>
        <taxon>Chordata</taxon>
        <taxon>Craniata</taxon>
        <taxon>Vertebrata</taxon>
        <taxon>Euteleostomi</taxon>
        <taxon>Mammalia</taxon>
        <taxon>Eutheria</taxon>
        <taxon>Euarchontoglires</taxon>
        <taxon>Glires</taxon>
        <taxon>Rodentia</taxon>
        <taxon>Myomorpha</taxon>
        <taxon>Muroidea</taxon>
        <taxon>Muridae</taxon>
        <taxon>Murinae</taxon>
        <taxon>Mus</taxon>
        <taxon>Mus</taxon>
    </lineage>
</organism>
<name>KCNJ9_MOUSE</name>
<dbReference type="EMBL" id="U11860">
    <property type="protein sequence ID" value="AAA53246.1"/>
    <property type="molecule type" value="mRNA"/>
</dbReference>
<dbReference type="EMBL" id="AF130860">
    <property type="protein sequence ID" value="AAD31016.1"/>
    <property type="molecule type" value="mRNA"/>
</dbReference>
<dbReference type="EMBL" id="BC065161">
    <property type="protein sequence ID" value="AAH65161.1"/>
    <property type="molecule type" value="mRNA"/>
</dbReference>
<dbReference type="CCDS" id="CCDS35783.1"/>
<dbReference type="PIR" id="S48739">
    <property type="entry name" value="S48739"/>
</dbReference>
<dbReference type="RefSeq" id="NP_001347737.1">
    <property type="nucleotide sequence ID" value="NM_001360808.1"/>
</dbReference>
<dbReference type="RefSeq" id="NP_032455.2">
    <property type="nucleotide sequence ID" value="NM_008429.3"/>
</dbReference>
<dbReference type="RefSeq" id="XP_006496741.1">
    <property type="nucleotide sequence ID" value="XM_006496678.3"/>
</dbReference>
<dbReference type="SMR" id="P48543"/>
<dbReference type="BioGRID" id="200906">
    <property type="interactions" value="1"/>
</dbReference>
<dbReference type="FunCoup" id="P48543">
    <property type="interactions" value="246"/>
</dbReference>
<dbReference type="STRING" id="10090.ENSMUSP00000060110"/>
<dbReference type="PhosphoSitePlus" id="P48543"/>
<dbReference type="PaxDb" id="10090-ENSMUSP00000060110"/>
<dbReference type="PeptideAtlas" id="P48543"/>
<dbReference type="ProteomicsDB" id="268961"/>
<dbReference type="ABCD" id="P48543">
    <property type="antibodies" value="1 sequenced antibody"/>
</dbReference>
<dbReference type="Antibodypedia" id="34266">
    <property type="antibodies" value="131 antibodies from 29 providers"/>
</dbReference>
<dbReference type="DNASU" id="16524"/>
<dbReference type="Ensembl" id="ENSMUST00000062387.8">
    <property type="protein sequence ID" value="ENSMUSP00000060110.3"/>
    <property type="gene ID" value="ENSMUSG00000038026.13"/>
</dbReference>
<dbReference type="Ensembl" id="ENSMUST00000194204.2">
    <property type="protein sequence ID" value="ENSMUSP00000141633.2"/>
    <property type="gene ID" value="ENSMUSG00000038026.13"/>
</dbReference>
<dbReference type="GeneID" id="16524"/>
<dbReference type="KEGG" id="mmu:16524"/>
<dbReference type="UCSC" id="uc007dqg.1">
    <property type="organism name" value="mouse"/>
</dbReference>
<dbReference type="AGR" id="MGI:108007"/>
<dbReference type="CTD" id="3765"/>
<dbReference type="MGI" id="MGI:108007">
    <property type="gene designation" value="Kcnj9"/>
</dbReference>
<dbReference type="VEuPathDB" id="HostDB:ENSMUSG00000038026"/>
<dbReference type="eggNOG" id="KOG3827">
    <property type="taxonomic scope" value="Eukaryota"/>
</dbReference>
<dbReference type="GeneTree" id="ENSGT01080000257365"/>
<dbReference type="HOGENOM" id="CLU_022738_11_0_1"/>
<dbReference type="InParanoid" id="P48543"/>
<dbReference type="OMA" id="RFSPMML"/>
<dbReference type="OrthoDB" id="273257at2759"/>
<dbReference type="PhylomeDB" id="P48543"/>
<dbReference type="TreeFam" id="TF313676"/>
<dbReference type="Reactome" id="R-MMU-1296041">
    <property type="pathway name" value="Activation of G protein gated Potassium channels"/>
</dbReference>
<dbReference type="Reactome" id="R-MMU-997272">
    <property type="pathway name" value="Inhibition of voltage gated Ca2+ channels via Gbeta/gamma subunits"/>
</dbReference>
<dbReference type="BioGRID-ORCS" id="16524">
    <property type="hits" value="2 hits in 76 CRISPR screens"/>
</dbReference>
<dbReference type="PRO" id="PR:P48543"/>
<dbReference type="Proteomes" id="UP000000589">
    <property type="component" value="Chromosome 1"/>
</dbReference>
<dbReference type="RNAct" id="P48543">
    <property type="molecule type" value="protein"/>
</dbReference>
<dbReference type="Bgee" id="ENSMUSG00000038026">
    <property type="expression patterns" value="Expressed in cerebellar vermis and 78 other cell types or tissues"/>
</dbReference>
<dbReference type="ExpressionAtlas" id="P48543">
    <property type="expression patterns" value="baseline and differential"/>
</dbReference>
<dbReference type="GO" id="GO:1902937">
    <property type="term" value="C:inward rectifier potassium channel complex"/>
    <property type="evidence" value="ECO:0000314"/>
    <property type="project" value="UniProtKB"/>
</dbReference>
<dbReference type="GO" id="GO:0098688">
    <property type="term" value="C:parallel fiber to Purkinje cell synapse"/>
    <property type="evidence" value="ECO:0000314"/>
    <property type="project" value="SynGO"/>
</dbReference>
<dbReference type="GO" id="GO:0042734">
    <property type="term" value="C:presynaptic membrane"/>
    <property type="evidence" value="ECO:0000314"/>
    <property type="project" value="SynGO"/>
</dbReference>
<dbReference type="GO" id="GO:0015467">
    <property type="term" value="F:G-protein activated inward rectifier potassium channel activity"/>
    <property type="evidence" value="ECO:0007669"/>
    <property type="project" value="InterPro"/>
</dbReference>
<dbReference type="GO" id="GO:0099505">
    <property type="term" value="P:regulation of presynaptic membrane potential"/>
    <property type="evidence" value="ECO:0000314"/>
    <property type="project" value="SynGO"/>
</dbReference>
<dbReference type="FunFam" id="1.10.287.70:FF:000019">
    <property type="entry name" value="G protein-activated inward rectifier potassium channel 1"/>
    <property type="match status" value="1"/>
</dbReference>
<dbReference type="FunFam" id="2.60.40.1400:FF:000001">
    <property type="entry name" value="G protein-activated inward rectifier potassium channel 2"/>
    <property type="match status" value="1"/>
</dbReference>
<dbReference type="Gene3D" id="1.10.287.70">
    <property type="match status" value="1"/>
</dbReference>
<dbReference type="Gene3D" id="2.60.40.1400">
    <property type="entry name" value="G protein-activated inward rectifier potassium channel 1"/>
    <property type="match status" value="1"/>
</dbReference>
<dbReference type="InterPro" id="IPR014756">
    <property type="entry name" value="Ig_E-set"/>
</dbReference>
<dbReference type="InterPro" id="IPR041647">
    <property type="entry name" value="IRK_C"/>
</dbReference>
<dbReference type="InterPro" id="IPR016449">
    <property type="entry name" value="K_chnl_inward-rec_Kir"/>
</dbReference>
<dbReference type="InterPro" id="IPR003276">
    <property type="entry name" value="K_chnl_inward-rec_Kir3.3"/>
</dbReference>
<dbReference type="InterPro" id="IPR013518">
    <property type="entry name" value="K_chnl_inward-rec_Kir_cyto"/>
</dbReference>
<dbReference type="InterPro" id="IPR040445">
    <property type="entry name" value="Kir_TM"/>
</dbReference>
<dbReference type="PANTHER" id="PTHR11767:SF17">
    <property type="entry name" value="G PROTEIN-ACTIVATED INWARD RECTIFIER POTASSIUM CHANNEL 3"/>
    <property type="match status" value="1"/>
</dbReference>
<dbReference type="PANTHER" id="PTHR11767">
    <property type="entry name" value="INWARD RECTIFIER POTASSIUM CHANNEL"/>
    <property type="match status" value="1"/>
</dbReference>
<dbReference type="Pfam" id="PF01007">
    <property type="entry name" value="IRK"/>
    <property type="match status" value="1"/>
</dbReference>
<dbReference type="Pfam" id="PF17655">
    <property type="entry name" value="IRK_C"/>
    <property type="match status" value="1"/>
</dbReference>
<dbReference type="PIRSF" id="PIRSF005465">
    <property type="entry name" value="GIRK_kir"/>
    <property type="match status" value="1"/>
</dbReference>
<dbReference type="PRINTS" id="PR01329">
    <property type="entry name" value="KIR33CHANNEL"/>
</dbReference>
<dbReference type="PRINTS" id="PR01320">
    <property type="entry name" value="KIRCHANNEL"/>
</dbReference>
<dbReference type="SUPFAM" id="SSF81296">
    <property type="entry name" value="E set domains"/>
    <property type="match status" value="1"/>
</dbReference>
<dbReference type="SUPFAM" id="SSF81324">
    <property type="entry name" value="Voltage-gated potassium channels"/>
    <property type="match status" value="1"/>
</dbReference>
<accession>P48543</accession>
<accession>Q9WUE1</accession>
<feature type="chain" id="PRO_0000154951" description="G protein-activated inward rectifier potassium channel 3">
    <location>
        <begin position="1"/>
        <end position="393"/>
    </location>
</feature>
<feature type="topological domain" description="Cytoplasmic" evidence="1">
    <location>
        <begin position="1"/>
        <end position="57"/>
    </location>
</feature>
<feature type="transmembrane region" description="Helical; Name=M1" evidence="1">
    <location>
        <begin position="58"/>
        <end position="82"/>
    </location>
</feature>
<feature type="topological domain" description="Extracellular" evidence="1">
    <location>
        <begin position="83"/>
        <end position="106"/>
    </location>
</feature>
<feature type="intramembrane region" description="Helical; Pore-forming; Name=H5" evidence="1">
    <location>
        <begin position="107"/>
        <end position="118"/>
    </location>
</feature>
<feature type="intramembrane region" description="Pore-forming" evidence="1">
    <location>
        <begin position="119"/>
        <end position="125"/>
    </location>
</feature>
<feature type="topological domain" description="Extracellular" evidence="1">
    <location>
        <begin position="126"/>
        <end position="134"/>
    </location>
</feature>
<feature type="transmembrane region" description="Helical; Name=M2" evidence="1">
    <location>
        <begin position="135"/>
        <end position="156"/>
    </location>
</feature>
<feature type="topological domain" description="Cytoplasmic" evidence="1">
    <location>
        <begin position="157"/>
        <end position="393"/>
    </location>
</feature>
<feature type="region of interest" description="Disordered" evidence="5">
    <location>
        <begin position="1"/>
        <end position="23"/>
    </location>
</feature>
<feature type="region of interest" description="Disordered" evidence="5">
    <location>
        <begin position="360"/>
        <end position="393"/>
    </location>
</feature>
<feature type="short sequence motif" description="Selectivity filter" evidence="1">
    <location>
        <begin position="120"/>
        <end position="125"/>
    </location>
</feature>
<feature type="short sequence motif" description="PDZ-binding">
    <location>
        <begin position="390"/>
        <end position="393"/>
    </location>
</feature>
<feature type="compositionally biased region" description="Pro residues" evidence="5">
    <location>
        <begin position="384"/>
        <end position="393"/>
    </location>
</feature>
<feature type="site" description="Role in the control of polyamine-mediated channel gating and in the blocking by intracellular magnesium" evidence="1">
    <location>
        <position position="150"/>
    </location>
</feature>
<feature type="sequence conflict" description="In Ref. 1; AAA53246." evidence="8" ref="1">
    <original>S</original>
    <variation>R</variation>
    <location>
        <position position="60"/>
    </location>
</feature>
<feature type="sequence conflict" description="In Ref. 1; AAA53246." evidence="8" ref="1">
    <original>A</original>
    <variation>V</variation>
    <location>
        <position position="77"/>
    </location>
</feature>
<feature type="sequence conflict" description="In Ref. 1; AAA53246." evidence="8" ref="1">
    <original>AGAGDGADKEHNGCLPPPESESKV</original>
    <variation>GRCGRWS</variation>
    <location>
        <begin position="370"/>
        <end position="393"/>
    </location>
</feature>
<keyword id="KW-0407">Ion channel</keyword>
<keyword id="KW-0406">Ion transport</keyword>
<keyword id="KW-0472">Membrane</keyword>
<keyword id="KW-0630">Potassium</keyword>
<keyword id="KW-0633">Potassium transport</keyword>
<keyword id="KW-1185">Reference proteome</keyword>
<keyword id="KW-0812">Transmembrane</keyword>
<keyword id="KW-1133">Transmembrane helix</keyword>
<keyword id="KW-0813">Transport</keyword>
<keyword id="KW-0851">Voltage-gated channel</keyword>
<proteinExistence type="evidence at protein level"/>
<comment type="function">
    <text evidence="6 7">Inward rectifier potassium channels are characterized by a greater tendency to allow potassium to flow into the cell rather than out of it. Their voltage dependence is regulated by the concentration of extracellular potassium; as external potassium is raised, the voltage range of the channel opening shifts to more positive voltages. The inward rectification is mainly due to the blockage of outward current by internal magnesium. This receptor is controlled by G proteins. Unable to produce channel activity when expressed alone (PubMed:7926018). Forms a functional channel in association with KCNJ3/GIRK1 (PubMed:10341034).</text>
</comment>
<comment type="catalytic activity">
    <reaction evidence="2">
        <text>K(+)(in) = K(+)(out)</text>
        <dbReference type="Rhea" id="RHEA:29463"/>
        <dbReference type="ChEBI" id="CHEBI:29103"/>
    </reaction>
</comment>
<comment type="subunit">
    <text evidence="3 6">Associates with KCNJ3/GIRK1 to form a G-protein-activated heteromultimer pore-forming unit (PubMed:10341034). Interacts (via PDZ-binding motif) with SNX27 (via PDZ domain); the interaction is required when endocytosed to prevent degradation in lysosomes and promote recycling to the plasma membrane (By similarity).</text>
</comment>
<comment type="subcellular location">
    <subcellularLocation>
        <location evidence="4">Membrane</location>
        <topology evidence="4">Multi-pass membrane protein</topology>
    </subcellularLocation>
</comment>
<comment type="tissue specificity">
    <text evidence="7">Expressed mainly in the brain, some expression in the skeletal muscle.</text>
</comment>
<comment type="domain">
    <text evidence="3">The PDZ-binding motif specifically binds the PDZ domain of SNX27: the specificity for SNX27 is provided by the 2 residues located upstream (Glu-388 and Ser-389) of the PDZ-binding motif.</text>
</comment>
<comment type="similarity">
    <text evidence="8">Belongs to the inward rectifier-type potassium channel (TC 1.A.2.1) family. KCNJ9 subfamily.</text>
</comment>
<gene>
    <name type="primary">Kcnj9</name>
    <name type="synonym">Girk3</name>
</gene>